<sequence length="72" mass="8478">MAMNTVFLHLSEEAIKRLNKLRGWRKVSRSAILREAVEQYLERQQFPVRKAKGGRQRDEAVGVEELCKQHKE</sequence>
<reference key="1">
    <citation type="journal article" date="2006" name="Proc. Natl. Acad. Sci. U.S.A.">
        <title>Identification of genes subject to positive selection in uropathogenic strains of Escherichia coli: a comparative genomics approach.</title>
        <authorList>
            <person name="Chen S.L."/>
            <person name="Hung C.-S."/>
            <person name="Xu J."/>
            <person name="Reigstad C.S."/>
            <person name="Magrini V."/>
            <person name="Sabo A."/>
            <person name="Blasiar D."/>
            <person name="Bieri T."/>
            <person name="Meyer R.R."/>
            <person name="Ozersky P."/>
            <person name="Armstrong J.R."/>
            <person name="Fulton R.S."/>
            <person name="Latreille J.P."/>
            <person name="Spieth J."/>
            <person name="Hooton T.M."/>
            <person name="Mardis E.R."/>
            <person name="Hultgren S.J."/>
            <person name="Gordon J.I."/>
        </authorList>
    </citation>
    <scope>NUCLEOTIDE SEQUENCE [LARGE SCALE GENOMIC DNA]</scope>
    <source>
        <strain>UTI89 / UPEC</strain>
    </source>
</reference>
<organism>
    <name type="scientific">Escherichia coli (strain UTI89 / UPEC)</name>
    <dbReference type="NCBI Taxonomy" id="364106"/>
    <lineage>
        <taxon>Bacteria</taxon>
        <taxon>Pseudomonadati</taxon>
        <taxon>Pseudomonadota</taxon>
        <taxon>Gammaproteobacteria</taxon>
        <taxon>Enterobacterales</taxon>
        <taxon>Enterobacteriaceae</taxon>
        <taxon>Escherichia</taxon>
    </lineage>
</organism>
<dbReference type="EMBL" id="CP000243">
    <property type="protein sequence ID" value="ABE09889.1"/>
    <property type="molecule type" value="Genomic_DNA"/>
</dbReference>
<dbReference type="RefSeq" id="WP_001314326.1">
    <property type="nucleotide sequence ID" value="NZ_CP064825.1"/>
</dbReference>
<dbReference type="SMR" id="Q1R425"/>
<dbReference type="KEGG" id="eci:UTI89_C4477"/>
<dbReference type="HOGENOM" id="CLU_182089_1_0_6"/>
<dbReference type="Proteomes" id="UP000001952">
    <property type="component" value="Chromosome"/>
</dbReference>
<dbReference type="GO" id="GO:0043565">
    <property type="term" value="F:sequence-specific DNA binding"/>
    <property type="evidence" value="ECO:0007669"/>
    <property type="project" value="UniProtKB-ARBA"/>
</dbReference>
<dbReference type="GO" id="GO:0006355">
    <property type="term" value="P:regulation of DNA-templated transcription"/>
    <property type="evidence" value="ECO:0007669"/>
    <property type="project" value="InterPro"/>
</dbReference>
<dbReference type="CDD" id="cd21631">
    <property type="entry name" value="RHH_CopG_NikR-like"/>
    <property type="match status" value="1"/>
</dbReference>
<dbReference type="Gene3D" id="1.10.1220.10">
    <property type="entry name" value="Met repressor-like"/>
    <property type="match status" value="1"/>
</dbReference>
<dbReference type="InterPro" id="IPR013321">
    <property type="entry name" value="Arc_rbn_hlx_hlx"/>
</dbReference>
<dbReference type="InterPro" id="IPR002145">
    <property type="entry name" value="CopG"/>
</dbReference>
<dbReference type="Pfam" id="PF01402">
    <property type="entry name" value="RHH_1"/>
    <property type="match status" value="1"/>
</dbReference>
<feature type="chain" id="PRO_0000293689" description="Uncharacterized protein YiiE">
    <location>
        <begin position="1"/>
        <end position="72"/>
    </location>
</feature>
<feature type="region of interest" description="Disordered" evidence="1">
    <location>
        <begin position="52"/>
        <end position="72"/>
    </location>
</feature>
<feature type="compositionally biased region" description="Basic and acidic residues" evidence="1">
    <location>
        <begin position="55"/>
        <end position="72"/>
    </location>
</feature>
<comment type="similarity">
    <text evidence="2">Belongs to the YiiE family.</text>
</comment>
<protein>
    <recommendedName>
        <fullName>Uncharacterized protein YiiE</fullName>
    </recommendedName>
</protein>
<evidence type="ECO:0000256" key="1">
    <source>
        <dbReference type="SAM" id="MobiDB-lite"/>
    </source>
</evidence>
<evidence type="ECO:0000305" key="2"/>
<proteinExistence type="inferred from homology"/>
<name>YIIE_ECOUT</name>
<gene>
    <name type="primary">yiiE</name>
    <name type="ordered locus">UTI89_C4477</name>
</gene>
<accession>Q1R425</accession>